<accession>O34899</accession>
<accession>Q7B2J8</accession>
<dbReference type="EC" id="2.5.1.17"/>
<dbReference type="EMBL" id="AJ223978">
    <property type="protein sequence ID" value="CAA11738.1"/>
    <property type="molecule type" value="Genomic_DNA"/>
</dbReference>
<dbReference type="EMBL" id="AL009126">
    <property type="protein sequence ID" value="CAB15305.2"/>
    <property type="molecule type" value="Genomic_DNA"/>
</dbReference>
<dbReference type="PIR" id="D70046">
    <property type="entry name" value="D70046"/>
</dbReference>
<dbReference type="RefSeq" id="NP_391195.2">
    <property type="nucleotide sequence ID" value="NC_000964.3"/>
</dbReference>
<dbReference type="RefSeq" id="WP_003228501.1">
    <property type="nucleotide sequence ID" value="NZ_OZ025638.1"/>
</dbReference>
<dbReference type="PDB" id="1RTY">
    <property type="method" value="X-ray"/>
    <property type="resolution" value="2.40 A"/>
    <property type="chains" value="A/B/C=1-193"/>
</dbReference>
<dbReference type="PDBsum" id="1RTY"/>
<dbReference type="SMR" id="O34899"/>
<dbReference type="FunCoup" id="O34899">
    <property type="interactions" value="422"/>
</dbReference>
<dbReference type="STRING" id="224308.BSU33150"/>
<dbReference type="PaxDb" id="224308-BSU33150"/>
<dbReference type="EnsemblBacteria" id="CAB15305">
    <property type="protein sequence ID" value="CAB15305"/>
    <property type="gene ID" value="BSU_33150"/>
</dbReference>
<dbReference type="GeneID" id="935972"/>
<dbReference type="KEGG" id="bsu:BSU33150"/>
<dbReference type="PATRIC" id="fig|224308.179.peg.3594"/>
<dbReference type="eggNOG" id="COG2096">
    <property type="taxonomic scope" value="Bacteria"/>
</dbReference>
<dbReference type="InParanoid" id="O34899"/>
<dbReference type="OrthoDB" id="9778896at2"/>
<dbReference type="PhylomeDB" id="O34899"/>
<dbReference type="BioCyc" id="BSUB:BSU33150-MONOMER"/>
<dbReference type="UniPathway" id="UPA00148">
    <property type="reaction ID" value="UER00233"/>
</dbReference>
<dbReference type="EvolutionaryTrace" id="O34899"/>
<dbReference type="Proteomes" id="UP000001570">
    <property type="component" value="Chromosome"/>
</dbReference>
<dbReference type="GO" id="GO:0005737">
    <property type="term" value="C:cytoplasm"/>
    <property type="evidence" value="ECO:0007669"/>
    <property type="project" value="UniProtKB-SubCell"/>
</dbReference>
<dbReference type="GO" id="GO:0005524">
    <property type="term" value="F:ATP binding"/>
    <property type="evidence" value="ECO:0007669"/>
    <property type="project" value="UniProtKB-KW"/>
</dbReference>
<dbReference type="GO" id="GO:0008817">
    <property type="term" value="F:corrinoid adenosyltransferase activity"/>
    <property type="evidence" value="ECO:0000318"/>
    <property type="project" value="GO_Central"/>
</dbReference>
<dbReference type="GO" id="GO:0009236">
    <property type="term" value="P:cobalamin biosynthetic process"/>
    <property type="evidence" value="ECO:0007669"/>
    <property type="project" value="UniProtKB-UniPathway"/>
</dbReference>
<dbReference type="GO" id="GO:0006779">
    <property type="term" value="P:porphyrin-containing compound biosynthetic process"/>
    <property type="evidence" value="ECO:0007669"/>
    <property type="project" value="UniProtKB-KW"/>
</dbReference>
<dbReference type="FunFam" id="1.20.1200.10:FF:000001">
    <property type="entry name" value="Cob(I)yrinic acid a,c-diamide adenosyltransferase"/>
    <property type="match status" value="1"/>
</dbReference>
<dbReference type="Gene3D" id="1.20.1200.10">
    <property type="entry name" value="Cobalamin adenosyltransferase-like"/>
    <property type="match status" value="1"/>
</dbReference>
<dbReference type="InterPro" id="IPR016030">
    <property type="entry name" value="CblAdoTrfase-like"/>
</dbReference>
<dbReference type="InterPro" id="IPR036451">
    <property type="entry name" value="CblAdoTrfase-like_sf"/>
</dbReference>
<dbReference type="InterPro" id="IPR029499">
    <property type="entry name" value="PduO-typ"/>
</dbReference>
<dbReference type="NCBIfam" id="TIGR00636">
    <property type="entry name" value="PduO_Nterm"/>
    <property type="match status" value="1"/>
</dbReference>
<dbReference type="PANTHER" id="PTHR12213">
    <property type="entry name" value="CORRINOID ADENOSYLTRANSFERASE"/>
    <property type="match status" value="1"/>
</dbReference>
<dbReference type="PANTHER" id="PTHR12213:SF0">
    <property type="entry name" value="CORRINOID ADENOSYLTRANSFERASE MMAB"/>
    <property type="match status" value="1"/>
</dbReference>
<dbReference type="Pfam" id="PF01923">
    <property type="entry name" value="Cob_adeno_trans"/>
    <property type="match status" value="1"/>
</dbReference>
<dbReference type="SUPFAM" id="SSF89028">
    <property type="entry name" value="Cobalamin adenosyltransferase-like"/>
    <property type="match status" value="1"/>
</dbReference>
<reference key="1">
    <citation type="journal article" date="1998" name="Microbiology">
        <title>The yvsA-yvqA (293 degrees - 289 degrees) region of the Bacillus subtilis chromosome containing genes involved in metal ion uptake and a putative sigma factor.</title>
        <authorList>
            <person name="Wipat A."/>
            <person name="Brignell C.S."/>
            <person name="Guy J.B."/>
            <person name="Rose M."/>
            <person name="Emmerson P.T."/>
            <person name="Harwood C.R."/>
        </authorList>
    </citation>
    <scope>NUCLEOTIDE SEQUENCE [GENOMIC DNA]</scope>
    <source>
        <strain>168</strain>
    </source>
</reference>
<reference key="2">
    <citation type="journal article" date="1997" name="Nature">
        <title>The complete genome sequence of the Gram-positive bacterium Bacillus subtilis.</title>
        <authorList>
            <person name="Kunst F."/>
            <person name="Ogasawara N."/>
            <person name="Moszer I."/>
            <person name="Albertini A.M."/>
            <person name="Alloni G."/>
            <person name="Azevedo V."/>
            <person name="Bertero M.G."/>
            <person name="Bessieres P."/>
            <person name="Bolotin A."/>
            <person name="Borchert S."/>
            <person name="Borriss R."/>
            <person name="Boursier L."/>
            <person name="Brans A."/>
            <person name="Braun M."/>
            <person name="Brignell S.C."/>
            <person name="Bron S."/>
            <person name="Brouillet S."/>
            <person name="Bruschi C.V."/>
            <person name="Caldwell B."/>
            <person name="Capuano V."/>
            <person name="Carter N.M."/>
            <person name="Choi S.-K."/>
            <person name="Codani J.-J."/>
            <person name="Connerton I.F."/>
            <person name="Cummings N.J."/>
            <person name="Daniel R.A."/>
            <person name="Denizot F."/>
            <person name="Devine K.M."/>
            <person name="Duesterhoeft A."/>
            <person name="Ehrlich S.D."/>
            <person name="Emmerson P.T."/>
            <person name="Entian K.-D."/>
            <person name="Errington J."/>
            <person name="Fabret C."/>
            <person name="Ferrari E."/>
            <person name="Foulger D."/>
            <person name="Fritz C."/>
            <person name="Fujita M."/>
            <person name="Fujita Y."/>
            <person name="Fuma S."/>
            <person name="Galizzi A."/>
            <person name="Galleron N."/>
            <person name="Ghim S.-Y."/>
            <person name="Glaser P."/>
            <person name="Goffeau A."/>
            <person name="Golightly E.J."/>
            <person name="Grandi G."/>
            <person name="Guiseppi G."/>
            <person name="Guy B.J."/>
            <person name="Haga K."/>
            <person name="Haiech J."/>
            <person name="Harwood C.R."/>
            <person name="Henaut A."/>
            <person name="Hilbert H."/>
            <person name="Holsappel S."/>
            <person name="Hosono S."/>
            <person name="Hullo M.-F."/>
            <person name="Itaya M."/>
            <person name="Jones L.-M."/>
            <person name="Joris B."/>
            <person name="Karamata D."/>
            <person name="Kasahara Y."/>
            <person name="Klaerr-Blanchard M."/>
            <person name="Klein C."/>
            <person name="Kobayashi Y."/>
            <person name="Koetter P."/>
            <person name="Koningstein G."/>
            <person name="Krogh S."/>
            <person name="Kumano M."/>
            <person name="Kurita K."/>
            <person name="Lapidus A."/>
            <person name="Lardinois S."/>
            <person name="Lauber J."/>
            <person name="Lazarevic V."/>
            <person name="Lee S.-M."/>
            <person name="Levine A."/>
            <person name="Liu H."/>
            <person name="Masuda S."/>
            <person name="Mauel C."/>
            <person name="Medigue C."/>
            <person name="Medina N."/>
            <person name="Mellado R.P."/>
            <person name="Mizuno M."/>
            <person name="Moestl D."/>
            <person name="Nakai S."/>
            <person name="Noback M."/>
            <person name="Noone D."/>
            <person name="O'Reilly M."/>
            <person name="Ogawa K."/>
            <person name="Ogiwara A."/>
            <person name="Oudega B."/>
            <person name="Park S.-H."/>
            <person name="Parro V."/>
            <person name="Pohl T.M."/>
            <person name="Portetelle D."/>
            <person name="Porwollik S."/>
            <person name="Prescott A.M."/>
            <person name="Presecan E."/>
            <person name="Pujic P."/>
            <person name="Purnelle B."/>
            <person name="Rapoport G."/>
            <person name="Rey M."/>
            <person name="Reynolds S."/>
            <person name="Rieger M."/>
            <person name="Rivolta C."/>
            <person name="Rocha E."/>
            <person name="Roche B."/>
            <person name="Rose M."/>
            <person name="Sadaie Y."/>
            <person name="Sato T."/>
            <person name="Scanlan E."/>
            <person name="Schleich S."/>
            <person name="Schroeter R."/>
            <person name="Scoffone F."/>
            <person name="Sekiguchi J."/>
            <person name="Sekowska A."/>
            <person name="Seror S.J."/>
            <person name="Serror P."/>
            <person name="Shin B.-S."/>
            <person name="Soldo B."/>
            <person name="Sorokin A."/>
            <person name="Tacconi E."/>
            <person name="Takagi T."/>
            <person name="Takahashi H."/>
            <person name="Takemaru K."/>
            <person name="Takeuchi M."/>
            <person name="Tamakoshi A."/>
            <person name="Tanaka T."/>
            <person name="Terpstra P."/>
            <person name="Tognoni A."/>
            <person name="Tosato V."/>
            <person name="Uchiyama S."/>
            <person name="Vandenbol M."/>
            <person name="Vannier F."/>
            <person name="Vassarotti A."/>
            <person name="Viari A."/>
            <person name="Wambutt R."/>
            <person name="Wedler E."/>
            <person name="Wedler H."/>
            <person name="Weitzenegger T."/>
            <person name="Winters P."/>
            <person name="Wipat A."/>
            <person name="Yamamoto H."/>
            <person name="Yamane K."/>
            <person name="Yasumoto K."/>
            <person name="Yata K."/>
            <person name="Yoshida K."/>
            <person name="Yoshikawa H.-F."/>
            <person name="Zumstein E."/>
            <person name="Yoshikawa H."/>
            <person name="Danchin A."/>
        </authorList>
    </citation>
    <scope>NUCLEOTIDE SEQUENCE [LARGE SCALE GENOMIC DNA]</scope>
    <source>
        <strain>168</strain>
    </source>
</reference>
<reference key="3">
    <citation type="journal article" date="2009" name="Microbiology">
        <title>From a consortium sequence to a unified sequence: the Bacillus subtilis 168 reference genome a decade later.</title>
        <authorList>
            <person name="Barbe V."/>
            <person name="Cruveiller S."/>
            <person name="Kunst F."/>
            <person name="Lenoble P."/>
            <person name="Meurice G."/>
            <person name="Sekowska A."/>
            <person name="Vallenet D."/>
            <person name="Wang T."/>
            <person name="Moszer I."/>
            <person name="Medigue C."/>
            <person name="Danchin A."/>
        </authorList>
    </citation>
    <scope>SEQUENCE REVISION TO 163</scope>
</reference>
<reference key="4">
    <citation type="journal article" date="2007" name="J. Struct. Funct. Genomics">
        <title>Functional insights from structural genomics.</title>
        <authorList>
            <person name="Forouhar F."/>
            <person name="Kuzin A."/>
            <person name="Seetharaman J."/>
            <person name="Lee I."/>
            <person name="Zhou W."/>
            <person name="Abashidze M."/>
            <person name="Chen Y."/>
            <person name="Yong W."/>
            <person name="Janjua H."/>
            <person name="Fang Y."/>
            <person name="Wang D."/>
            <person name="Cunningham K."/>
            <person name="Xiao R."/>
            <person name="Acton T.B."/>
            <person name="Pichersky E."/>
            <person name="Klessig D.F."/>
            <person name="Porter C.W."/>
            <person name="Montelione G.T."/>
            <person name="Tong L."/>
        </authorList>
    </citation>
    <scope>X-RAY CRYSTALLOGRAPHY (2.4 ANGSTROMS) IN COMPLEX WITH PHOSPHATE</scope>
    <scope>SUBUNIT</scope>
</reference>
<comment type="catalytic activity">
    <reaction>
        <text>2 cob(II)yrinate a,c diamide + reduced [electron-transfer flavoprotein] + 2 ATP = 2 adenosylcob(III)yrinate a,c-diamide + 2 triphosphate + oxidized [electron-transfer flavoprotein] + 3 H(+)</text>
        <dbReference type="Rhea" id="RHEA:11528"/>
        <dbReference type="Rhea" id="RHEA-COMP:10685"/>
        <dbReference type="Rhea" id="RHEA-COMP:10686"/>
        <dbReference type="ChEBI" id="CHEBI:15378"/>
        <dbReference type="ChEBI" id="CHEBI:18036"/>
        <dbReference type="ChEBI" id="CHEBI:30616"/>
        <dbReference type="ChEBI" id="CHEBI:57692"/>
        <dbReference type="ChEBI" id="CHEBI:58307"/>
        <dbReference type="ChEBI" id="CHEBI:58503"/>
        <dbReference type="ChEBI" id="CHEBI:58537"/>
        <dbReference type="EC" id="2.5.1.17"/>
    </reaction>
</comment>
<comment type="catalytic activity">
    <reaction>
        <text>2 cob(II)alamin + reduced [electron-transfer flavoprotein] + 2 ATP = 2 adenosylcob(III)alamin + 2 triphosphate + oxidized [electron-transfer flavoprotein] + 3 H(+)</text>
        <dbReference type="Rhea" id="RHEA:28671"/>
        <dbReference type="Rhea" id="RHEA-COMP:10685"/>
        <dbReference type="Rhea" id="RHEA-COMP:10686"/>
        <dbReference type="ChEBI" id="CHEBI:15378"/>
        <dbReference type="ChEBI" id="CHEBI:16304"/>
        <dbReference type="ChEBI" id="CHEBI:18036"/>
        <dbReference type="ChEBI" id="CHEBI:18408"/>
        <dbReference type="ChEBI" id="CHEBI:30616"/>
        <dbReference type="ChEBI" id="CHEBI:57692"/>
        <dbReference type="ChEBI" id="CHEBI:58307"/>
        <dbReference type="EC" id="2.5.1.17"/>
    </reaction>
</comment>
<comment type="pathway">
    <text>Cofactor biosynthesis; adenosylcobalamin biosynthesis; adenosylcobalamin from cob(II)yrinate a,c-diamide: step 2/7.</text>
</comment>
<comment type="subunit">
    <text evidence="2">Homotrimer.</text>
</comment>
<comment type="subcellular location">
    <subcellularLocation>
        <location evidence="3">Cytoplasm</location>
    </subcellularLocation>
</comment>
<comment type="similarity">
    <text evidence="3">Belongs to the Cob(I)alamin adenosyltransferase family.</text>
</comment>
<sequence length="193" mass="21504">MKLYTKTGDKGQTGLVGGRTDKDSLRVESYGTIDELNSFIGLALAELSGQPGFEDLTAELLTIQHELFDCGGDLAIVTERKDYKLTEESVSFLETRIDAYTAEAPELKKFILPGGSKCASLLHIARTITRRAERRVVALMKSEEIHETVLRYLNRLSDYFFAAARVVNARSGIGDVEYERSAIVFRDRNSSES</sequence>
<name>PDUO_BACSU</name>
<proteinExistence type="evidence at protein level"/>
<gene>
    <name type="primary">yvqK</name>
    <name type="ordered locus">BSU33150</name>
</gene>
<keyword id="KW-0002">3D-structure</keyword>
<keyword id="KW-0067">ATP-binding</keyword>
<keyword id="KW-0169">Cobalamin biosynthesis</keyword>
<keyword id="KW-0963">Cytoplasm</keyword>
<keyword id="KW-0547">Nucleotide-binding</keyword>
<keyword id="KW-0627">Porphyrin biosynthesis</keyword>
<keyword id="KW-1185">Reference proteome</keyword>
<keyword id="KW-0808">Transferase</keyword>
<feature type="chain" id="PRO_0000360832" description="Corrinoid adenosyltransferase">
    <location>
        <begin position="1"/>
        <end position="193"/>
    </location>
</feature>
<feature type="binding site" evidence="1">
    <location>
        <begin position="5"/>
        <end position="13"/>
    </location>
    <ligand>
        <name>ATP</name>
        <dbReference type="ChEBI" id="CHEBI:30616"/>
    </ligand>
</feature>
<feature type="binding site" evidence="1">
    <location>
        <position position="22"/>
    </location>
    <ligand>
        <name>ATP</name>
        <dbReference type="ChEBI" id="CHEBI:30616"/>
    </ligand>
</feature>
<feature type="binding site" evidence="1">
    <location>
        <begin position="130"/>
        <end position="135"/>
    </location>
    <ligand>
        <name>ATP</name>
        <dbReference type="ChEBI" id="CHEBI:30616"/>
    </ligand>
</feature>
<feature type="binding site" evidence="1">
    <location>
        <position position="154"/>
    </location>
    <ligand>
        <name>ATP</name>
        <dbReference type="ChEBI" id="CHEBI:30616"/>
    </ligand>
</feature>
<feature type="sequence conflict" description="In Ref. 1; CAA11738." evidence="3" ref="1">
    <original>A</original>
    <variation>G</variation>
    <location>
        <position position="163"/>
    </location>
</feature>
<feature type="helix" evidence="4">
    <location>
        <begin position="24"/>
        <end position="47"/>
    </location>
</feature>
<feature type="strand" evidence="4">
    <location>
        <begin position="50"/>
        <end position="52"/>
    </location>
</feature>
<feature type="helix" evidence="4">
    <location>
        <begin position="54"/>
        <end position="75"/>
    </location>
</feature>
<feature type="helix" evidence="4">
    <location>
        <begin position="87"/>
        <end position="103"/>
    </location>
</feature>
<feature type="helix" evidence="4">
    <location>
        <begin position="117"/>
        <end position="142"/>
    </location>
</feature>
<feature type="helix" evidence="4">
    <location>
        <begin position="147"/>
        <end position="170"/>
    </location>
</feature>
<evidence type="ECO:0000250" key="1"/>
<evidence type="ECO:0000269" key="2">
    <source>
    </source>
</evidence>
<evidence type="ECO:0000305" key="3"/>
<evidence type="ECO:0007829" key="4">
    <source>
        <dbReference type="PDB" id="1RTY"/>
    </source>
</evidence>
<organism>
    <name type="scientific">Bacillus subtilis (strain 168)</name>
    <dbReference type="NCBI Taxonomy" id="224308"/>
    <lineage>
        <taxon>Bacteria</taxon>
        <taxon>Bacillati</taxon>
        <taxon>Bacillota</taxon>
        <taxon>Bacilli</taxon>
        <taxon>Bacillales</taxon>
        <taxon>Bacillaceae</taxon>
        <taxon>Bacillus</taxon>
    </lineage>
</organism>
<protein>
    <recommendedName>
        <fullName>Corrinoid adenosyltransferase</fullName>
        <ecNumber>2.5.1.17</ecNumber>
    </recommendedName>
    <alternativeName>
        <fullName>Cob(II)alamin adenosyltransferase</fullName>
    </alternativeName>
    <alternativeName>
        <fullName>Cob(II)yrinic acid a,c-diamide adenosyltransferase</fullName>
    </alternativeName>
    <alternativeName>
        <fullName>Cobinamide/cobalamin adenosyltransferase</fullName>
    </alternativeName>
</protein>